<accession>Q8EIV5</accession>
<keyword id="KW-0349">Heme</keyword>
<keyword id="KW-0376">Hydrogen peroxide</keyword>
<keyword id="KW-0408">Iron</keyword>
<keyword id="KW-0479">Metal-binding</keyword>
<keyword id="KW-0560">Oxidoreductase</keyword>
<keyword id="KW-0575">Peroxidase</keyword>
<keyword id="KW-1185">Reference proteome</keyword>
<keyword id="KW-0732">Signal</keyword>
<comment type="function">
    <text evidence="1">Bifunctional enzyme with both catalase and broad-spectrum peroxidase activity.</text>
</comment>
<comment type="catalytic activity">
    <reaction evidence="1">
        <text>H2O2 + AH2 = A + 2 H2O</text>
        <dbReference type="Rhea" id="RHEA:30275"/>
        <dbReference type="ChEBI" id="CHEBI:13193"/>
        <dbReference type="ChEBI" id="CHEBI:15377"/>
        <dbReference type="ChEBI" id="CHEBI:16240"/>
        <dbReference type="ChEBI" id="CHEBI:17499"/>
        <dbReference type="EC" id="1.11.1.21"/>
    </reaction>
</comment>
<comment type="catalytic activity">
    <reaction evidence="1">
        <text>2 H2O2 = O2 + 2 H2O</text>
        <dbReference type="Rhea" id="RHEA:20309"/>
        <dbReference type="ChEBI" id="CHEBI:15377"/>
        <dbReference type="ChEBI" id="CHEBI:15379"/>
        <dbReference type="ChEBI" id="CHEBI:16240"/>
        <dbReference type="EC" id="1.11.1.21"/>
    </reaction>
</comment>
<comment type="cofactor">
    <cofactor evidence="1">
        <name>heme b</name>
        <dbReference type="ChEBI" id="CHEBI:60344"/>
    </cofactor>
    <text evidence="1">Binds 1 heme b (iron(II)-protoporphyrin IX) group per dimer.</text>
</comment>
<comment type="subunit">
    <text evidence="1">Homodimer or homotetramer.</text>
</comment>
<comment type="PTM">
    <text evidence="1">Formation of the three residue Trp-Tyr-Met cross-link is important for the catalase, but not the peroxidase activity of the enzyme.</text>
</comment>
<comment type="similarity">
    <text evidence="1">Belongs to the peroxidase family. Peroxidase/catalase subfamily.</text>
</comment>
<evidence type="ECO:0000255" key="1">
    <source>
        <dbReference type="HAMAP-Rule" id="MF_01961"/>
    </source>
</evidence>
<reference key="1">
    <citation type="journal article" date="2002" name="Nat. Biotechnol.">
        <title>Genome sequence of the dissimilatory metal ion-reducing bacterium Shewanella oneidensis.</title>
        <authorList>
            <person name="Heidelberg J.F."/>
            <person name="Paulsen I.T."/>
            <person name="Nelson K.E."/>
            <person name="Gaidos E.J."/>
            <person name="Nelson W.C."/>
            <person name="Read T.D."/>
            <person name="Eisen J.A."/>
            <person name="Seshadri R."/>
            <person name="Ward N.L."/>
            <person name="Methe B.A."/>
            <person name="Clayton R.A."/>
            <person name="Meyer T."/>
            <person name="Tsapin A."/>
            <person name="Scott J."/>
            <person name="Beanan M.J."/>
            <person name="Brinkac L.M."/>
            <person name="Daugherty S.C."/>
            <person name="DeBoy R.T."/>
            <person name="Dodson R.J."/>
            <person name="Durkin A.S."/>
            <person name="Haft D.H."/>
            <person name="Kolonay J.F."/>
            <person name="Madupu R."/>
            <person name="Peterson J.D."/>
            <person name="Umayam L.A."/>
            <person name="White O."/>
            <person name="Wolf A.M."/>
            <person name="Vamathevan J.J."/>
            <person name="Weidman J.F."/>
            <person name="Impraim M."/>
            <person name="Lee K."/>
            <person name="Berry K.J."/>
            <person name="Lee C."/>
            <person name="Mueller J."/>
            <person name="Khouri H.M."/>
            <person name="Gill J."/>
            <person name="Utterback T.R."/>
            <person name="McDonald L.A."/>
            <person name="Feldblyum T.V."/>
            <person name="Smith H.O."/>
            <person name="Venter J.C."/>
            <person name="Nealson K.H."/>
            <person name="Fraser C.M."/>
        </authorList>
    </citation>
    <scope>NUCLEOTIDE SEQUENCE [LARGE SCALE GENOMIC DNA]</scope>
    <source>
        <strain>ATCC 700550 / JCM 31522 / CIP 106686 / LMG 19005 / NCIMB 14063 / MR-1</strain>
    </source>
</reference>
<protein>
    <recommendedName>
        <fullName evidence="1">Catalase-peroxidase 2</fullName>
        <shortName evidence="1">CP 2</shortName>
        <ecNumber evidence="1">1.11.1.21</ecNumber>
    </recommendedName>
    <alternativeName>
        <fullName evidence="1">Peroxidase/catalase 2</fullName>
    </alternativeName>
</protein>
<organism>
    <name type="scientific">Shewanella oneidensis (strain ATCC 700550 / JCM 31522 / CIP 106686 / LMG 19005 / NCIMB 14063 / MR-1)</name>
    <dbReference type="NCBI Taxonomy" id="211586"/>
    <lineage>
        <taxon>Bacteria</taxon>
        <taxon>Pseudomonadati</taxon>
        <taxon>Pseudomonadota</taxon>
        <taxon>Gammaproteobacteria</taxon>
        <taxon>Alteromonadales</taxon>
        <taxon>Shewanellaceae</taxon>
        <taxon>Shewanella</taxon>
    </lineage>
</organism>
<dbReference type="EC" id="1.11.1.21" evidence="1"/>
<dbReference type="EMBL" id="AE014299">
    <property type="protein sequence ID" value="AAN53803.1"/>
    <property type="molecule type" value="Genomic_DNA"/>
</dbReference>
<dbReference type="RefSeq" id="NP_716358.1">
    <property type="nucleotide sequence ID" value="NC_004347.2"/>
</dbReference>
<dbReference type="RefSeq" id="WP_011071036.1">
    <property type="nucleotide sequence ID" value="NC_004347.2"/>
</dbReference>
<dbReference type="SMR" id="Q8EIV5"/>
<dbReference type="STRING" id="211586.SO_0725"/>
<dbReference type="PeroxiBase" id="2444">
    <property type="entry name" value="SonCP01"/>
</dbReference>
<dbReference type="PaxDb" id="211586-SO_0725"/>
<dbReference type="KEGG" id="son:SO_0725"/>
<dbReference type="PATRIC" id="fig|211586.12.peg.694"/>
<dbReference type="eggNOG" id="COG0376">
    <property type="taxonomic scope" value="Bacteria"/>
</dbReference>
<dbReference type="HOGENOM" id="CLU_025424_2_0_6"/>
<dbReference type="OrthoDB" id="9759743at2"/>
<dbReference type="PhylomeDB" id="Q8EIV5"/>
<dbReference type="BioCyc" id="SONE211586:G1GMP-679-MONOMER"/>
<dbReference type="Proteomes" id="UP000008186">
    <property type="component" value="Chromosome"/>
</dbReference>
<dbReference type="GO" id="GO:0005829">
    <property type="term" value="C:cytosol"/>
    <property type="evidence" value="ECO:0000318"/>
    <property type="project" value="GO_Central"/>
</dbReference>
<dbReference type="GO" id="GO:0004096">
    <property type="term" value="F:catalase activity"/>
    <property type="evidence" value="ECO:0000318"/>
    <property type="project" value="GO_Central"/>
</dbReference>
<dbReference type="GO" id="GO:0020037">
    <property type="term" value="F:heme binding"/>
    <property type="evidence" value="ECO:0000318"/>
    <property type="project" value="GO_Central"/>
</dbReference>
<dbReference type="GO" id="GO:0046872">
    <property type="term" value="F:metal ion binding"/>
    <property type="evidence" value="ECO:0007669"/>
    <property type="project" value="UniProtKB-KW"/>
</dbReference>
<dbReference type="GO" id="GO:0070301">
    <property type="term" value="P:cellular response to hydrogen peroxide"/>
    <property type="evidence" value="ECO:0000318"/>
    <property type="project" value="GO_Central"/>
</dbReference>
<dbReference type="GO" id="GO:0042744">
    <property type="term" value="P:hydrogen peroxide catabolic process"/>
    <property type="evidence" value="ECO:0000318"/>
    <property type="project" value="GO_Central"/>
</dbReference>
<dbReference type="CDD" id="cd08200">
    <property type="entry name" value="catalase_peroxidase_2"/>
    <property type="match status" value="1"/>
</dbReference>
<dbReference type="FunFam" id="1.10.420.10:FF:000002">
    <property type="entry name" value="Catalase-peroxidase"/>
    <property type="match status" value="1"/>
</dbReference>
<dbReference type="FunFam" id="1.10.420.10:FF:000004">
    <property type="entry name" value="Catalase-peroxidase"/>
    <property type="match status" value="1"/>
</dbReference>
<dbReference type="FunFam" id="1.10.520.10:FF:000002">
    <property type="entry name" value="Catalase-peroxidase"/>
    <property type="match status" value="1"/>
</dbReference>
<dbReference type="Gene3D" id="1.10.520.10">
    <property type="match status" value="2"/>
</dbReference>
<dbReference type="Gene3D" id="1.10.420.10">
    <property type="entry name" value="Peroxidase, domain 2"/>
    <property type="match status" value="2"/>
</dbReference>
<dbReference type="HAMAP" id="MF_01961">
    <property type="entry name" value="Catal_peroxid"/>
    <property type="match status" value="1"/>
</dbReference>
<dbReference type="InterPro" id="IPR000763">
    <property type="entry name" value="Catalase_peroxidase"/>
</dbReference>
<dbReference type="InterPro" id="IPR002016">
    <property type="entry name" value="Haem_peroxidase"/>
</dbReference>
<dbReference type="InterPro" id="IPR010255">
    <property type="entry name" value="Haem_peroxidase_sf"/>
</dbReference>
<dbReference type="InterPro" id="IPR019794">
    <property type="entry name" value="Peroxidases_AS"/>
</dbReference>
<dbReference type="InterPro" id="IPR019793">
    <property type="entry name" value="Peroxidases_heam-ligand_BS"/>
</dbReference>
<dbReference type="NCBIfam" id="TIGR00198">
    <property type="entry name" value="cat_per_HPI"/>
    <property type="match status" value="1"/>
</dbReference>
<dbReference type="NCBIfam" id="NF011635">
    <property type="entry name" value="PRK15061.1"/>
    <property type="match status" value="1"/>
</dbReference>
<dbReference type="PANTHER" id="PTHR30555:SF0">
    <property type="entry name" value="CATALASE-PEROXIDASE"/>
    <property type="match status" value="1"/>
</dbReference>
<dbReference type="PANTHER" id="PTHR30555">
    <property type="entry name" value="HYDROPEROXIDASE I, BIFUNCTIONAL CATALASE-PEROXIDASE"/>
    <property type="match status" value="1"/>
</dbReference>
<dbReference type="Pfam" id="PF00141">
    <property type="entry name" value="peroxidase"/>
    <property type="match status" value="2"/>
</dbReference>
<dbReference type="PRINTS" id="PR00460">
    <property type="entry name" value="BPEROXIDASE"/>
</dbReference>
<dbReference type="PRINTS" id="PR00458">
    <property type="entry name" value="PEROXIDASE"/>
</dbReference>
<dbReference type="SUPFAM" id="SSF48113">
    <property type="entry name" value="Heme-dependent peroxidases"/>
    <property type="match status" value="2"/>
</dbReference>
<dbReference type="PROSITE" id="PS00435">
    <property type="entry name" value="PEROXIDASE_1"/>
    <property type="match status" value="1"/>
</dbReference>
<dbReference type="PROSITE" id="PS00436">
    <property type="entry name" value="PEROXIDASE_2"/>
    <property type="match status" value="1"/>
</dbReference>
<dbReference type="PROSITE" id="PS50873">
    <property type="entry name" value="PEROXIDASE_4"/>
    <property type="match status" value="1"/>
</dbReference>
<gene>
    <name evidence="1" type="primary">katG2</name>
    <name type="ordered locus">SO_0725</name>
</gene>
<proteinExistence type="inferred from homology"/>
<sequence length="741" mass="81256">MKINTLPTLSALTLAMSLALGAGMATAQEQATGNQFWWPEKLNLSPLRQNAIESNPYGSDYRYAEAFNTLDLDAVKKDIKALMTESQDWWPADYGHYGPFFIRMAWHSAGVYRIFDGRGGAAGGQQRFEPLNSWPADNVSLDKARRLLWPIKQKYGSKLSWGDLMVLTGNVALESMGFKTFGFGGGRVDDWEAEMVNWGSEKAWLDNKRHNGKGELAKPMGATQMGLIYVNPEGPNGVPDPLASAKEIRDTFGRMAMNDEETVALIAGGHTFGKAHGAHDPAKCVGADPAAAGIEEQGLGWKNKCGKGHSEDTVTSGLEGAWSSNPTKWTMEYLTWLYTFDWVQTKSPAGHIQWTPADGKAANLVPDAHLPDKRHAPIMFTSDIALKADPIYREITTRFLKNPQEFELAFAKAWFKLTHRDLGPKARYLGADVPAEALIWQDPIPALDHPLIDNADIKALGNKILASGLTVPELVRTAWASASSFRGTDMRGGANGARIRLEPMMNWQANNPKELAKVLAKLEKVQKDFNGSLKGSKKVSLADVIVLGGSVAVEKAAKEAGVVISVPFTPGRMDATQVQTDVNSFAVLEPAADGFRNYYSKDSSLSPAEMLIERANMLNLTVPEMTVLVGGLRALDANSAGVKHGVFTDKPGVLSNDFFVNLLDMSTKWRKSDKQEGIYEGQDRNSGKLKWTATPVDLIFGSHSELRAVSEVYGAQDGQDRFIQDFVKAWNKVMNADRFDI</sequence>
<name>KATG2_SHEON</name>
<feature type="signal peptide" evidence="1">
    <location>
        <begin position="1"/>
        <end position="27"/>
    </location>
</feature>
<feature type="chain" id="PRO_0000354921" description="Catalase-peroxidase 2">
    <location>
        <begin position="28"/>
        <end position="741"/>
    </location>
</feature>
<feature type="active site" description="Proton acceptor" evidence="1">
    <location>
        <position position="107"/>
    </location>
</feature>
<feature type="binding site" description="axial binding residue" evidence="1">
    <location>
        <position position="270"/>
    </location>
    <ligand>
        <name>heme b</name>
        <dbReference type="ChEBI" id="CHEBI:60344"/>
    </ligand>
    <ligandPart>
        <name>Fe</name>
        <dbReference type="ChEBI" id="CHEBI:18248"/>
    </ligandPart>
</feature>
<feature type="site" description="Transition state stabilizer" evidence="1">
    <location>
        <position position="103"/>
    </location>
</feature>
<feature type="cross-link" description="Tryptophyl-tyrosyl-methioninium (Trp-Tyr) (with M-255)" evidence="1">
    <location>
        <begin position="106"/>
        <end position="229"/>
    </location>
</feature>
<feature type="cross-link" description="Tryptophyl-tyrosyl-methioninium (Tyr-Met) (with W-106)" evidence="1">
    <location>
        <begin position="229"/>
        <end position="255"/>
    </location>
</feature>